<organism>
    <name type="scientific">Brucella abortus biovar 1 (strain 9-941)</name>
    <dbReference type="NCBI Taxonomy" id="262698"/>
    <lineage>
        <taxon>Bacteria</taxon>
        <taxon>Pseudomonadati</taxon>
        <taxon>Pseudomonadota</taxon>
        <taxon>Alphaproteobacteria</taxon>
        <taxon>Hyphomicrobiales</taxon>
        <taxon>Brucellaceae</taxon>
        <taxon>Brucella/Ochrobactrum group</taxon>
        <taxon>Brucella</taxon>
    </lineage>
</organism>
<accession>Q9AEQ5</accession>
<accession>Q57BY1</accession>
<protein>
    <recommendedName>
        <fullName evidence="1">Peptidyl-tRNA hydrolase</fullName>
        <shortName evidence="1">Pth</shortName>
        <ecNumber evidence="1">3.1.1.29</ecNumber>
    </recommendedName>
</protein>
<reference key="1">
    <citation type="submission" date="2001-03" db="EMBL/GenBank/DDBJ databases">
        <title>BuG, a putative GTP-binding protein essential for siderophore 2,3-dihydroxybenzoic acid utilization by Brucella melitensis 16M.</title>
        <authorList>
            <person name="Danese I."/>
            <person name="Haine V."/>
            <person name="Letesson J.J."/>
        </authorList>
    </citation>
    <scope>NUCLEOTIDE SEQUENCE [GENOMIC DNA]</scope>
</reference>
<reference key="2">
    <citation type="journal article" date="2005" name="J. Bacteriol.">
        <title>Completion of the genome sequence of Brucella abortus and comparison to the highly similar genomes of Brucella melitensis and Brucella suis.</title>
        <authorList>
            <person name="Halling S.M."/>
            <person name="Peterson-Burch B.D."/>
            <person name="Bricker B.J."/>
            <person name="Zuerner R.L."/>
            <person name="Qing Z."/>
            <person name="Li L.-L."/>
            <person name="Kapur V."/>
            <person name="Alt D.P."/>
            <person name="Olsen S.C."/>
        </authorList>
    </citation>
    <scope>NUCLEOTIDE SEQUENCE [LARGE SCALE GENOMIC DNA]</scope>
    <source>
        <strain>9-941</strain>
    </source>
</reference>
<dbReference type="EC" id="3.1.1.29" evidence="1"/>
<dbReference type="EMBL" id="AY028973">
    <property type="protein sequence ID" value="AAK29776.1"/>
    <property type="molecule type" value="Genomic_DNA"/>
</dbReference>
<dbReference type="EMBL" id="AE017223">
    <property type="protein sequence ID" value="AAX74853.1"/>
    <property type="molecule type" value="Genomic_DNA"/>
</dbReference>
<dbReference type="RefSeq" id="WP_002964641.1">
    <property type="nucleotide sequence ID" value="NC_006932.1"/>
</dbReference>
<dbReference type="SMR" id="Q9AEQ5"/>
<dbReference type="EnsemblBacteria" id="AAX74853">
    <property type="protein sequence ID" value="AAX74853"/>
    <property type="gene ID" value="BruAb1_1525"/>
</dbReference>
<dbReference type="GeneID" id="93016185"/>
<dbReference type="KEGG" id="bmb:BruAb1_1525"/>
<dbReference type="HOGENOM" id="CLU_062456_1_1_5"/>
<dbReference type="PRO" id="PR:Q9AEQ5"/>
<dbReference type="Proteomes" id="UP000000540">
    <property type="component" value="Chromosome I"/>
</dbReference>
<dbReference type="GO" id="GO:0005737">
    <property type="term" value="C:cytoplasm"/>
    <property type="evidence" value="ECO:0007669"/>
    <property type="project" value="UniProtKB-SubCell"/>
</dbReference>
<dbReference type="GO" id="GO:0004045">
    <property type="term" value="F:peptidyl-tRNA hydrolase activity"/>
    <property type="evidence" value="ECO:0007669"/>
    <property type="project" value="UniProtKB-UniRule"/>
</dbReference>
<dbReference type="GO" id="GO:0000049">
    <property type="term" value="F:tRNA binding"/>
    <property type="evidence" value="ECO:0007669"/>
    <property type="project" value="UniProtKB-UniRule"/>
</dbReference>
<dbReference type="GO" id="GO:0006515">
    <property type="term" value="P:protein quality control for misfolded or incompletely synthesized proteins"/>
    <property type="evidence" value="ECO:0007669"/>
    <property type="project" value="UniProtKB-UniRule"/>
</dbReference>
<dbReference type="GO" id="GO:0072344">
    <property type="term" value="P:rescue of stalled ribosome"/>
    <property type="evidence" value="ECO:0007669"/>
    <property type="project" value="UniProtKB-UniRule"/>
</dbReference>
<dbReference type="CDD" id="cd00462">
    <property type="entry name" value="PTH"/>
    <property type="match status" value="1"/>
</dbReference>
<dbReference type="FunFam" id="3.40.50.1470:FF:000001">
    <property type="entry name" value="Peptidyl-tRNA hydrolase"/>
    <property type="match status" value="1"/>
</dbReference>
<dbReference type="Gene3D" id="3.40.50.1470">
    <property type="entry name" value="Peptidyl-tRNA hydrolase"/>
    <property type="match status" value="1"/>
</dbReference>
<dbReference type="HAMAP" id="MF_00083">
    <property type="entry name" value="Pept_tRNA_hydro_bact"/>
    <property type="match status" value="1"/>
</dbReference>
<dbReference type="InterPro" id="IPR001328">
    <property type="entry name" value="Pept_tRNA_hydro"/>
</dbReference>
<dbReference type="InterPro" id="IPR018171">
    <property type="entry name" value="Pept_tRNA_hydro_CS"/>
</dbReference>
<dbReference type="InterPro" id="IPR036416">
    <property type="entry name" value="Pept_tRNA_hydro_sf"/>
</dbReference>
<dbReference type="NCBIfam" id="TIGR00447">
    <property type="entry name" value="pth"/>
    <property type="match status" value="1"/>
</dbReference>
<dbReference type="PANTHER" id="PTHR17224">
    <property type="entry name" value="PEPTIDYL-TRNA HYDROLASE"/>
    <property type="match status" value="1"/>
</dbReference>
<dbReference type="PANTHER" id="PTHR17224:SF1">
    <property type="entry name" value="PEPTIDYL-TRNA HYDROLASE"/>
    <property type="match status" value="1"/>
</dbReference>
<dbReference type="Pfam" id="PF01195">
    <property type="entry name" value="Pept_tRNA_hydro"/>
    <property type="match status" value="1"/>
</dbReference>
<dbReference type="SUPFAM" id="SSF53178">
    <property type="entry name" value="Peptidyl-tRNA hydrolase-like"/>
    <property type="match status" value="1"/>
</dbReference>
<dbReference type="PROSITE" id="PS01195">
    <property type="entry name" value="PEPT_TRNA_HYDROL_1"/>
    <property type="match status" value="1"/>
</dbReference>
<dbReference type="PROSITE" id="PS01196">
    <property type="entry name" value="PEPT_TRNA_HYDROL_2"/>
    <property type="match status" value="1"/>
</dbReference>
<name>PTH_BRUAB</name>
<evidence type="ECO:0000255" key="1">
    <source>
        <dbReference type="HAMAP-Rule" id="MF_00083"/>
    </source>
</evidence>
<evidence type="ECO:0000256" key="2">
    <source>
        <dbReference type="SAM" id="MobiDB-lite"/>
    </source>
</evidence>
<comment type="function">
    <text evidence="1">Hydrolyzes ribosome-free peptidyl-tRNAs (with 1 or more amino acids incorporated), which drop off the ribosome during protein synthesis, or as a result of ribosome stalling.</text>
</comment>
<comment type="function">
    <text evidence="1">Catalyzes the release of premature peptidyl moieties from peptidyl-tRNA molecules trapped in stalled 50S ribosomal subunits, and thus maintains levels of free tRNAs and 50S ribosomes.</text>
</comment>
<comment type="catalytic activity">
    <reaction evidence="1">
        <text>an N-acyl-L-alpha-aminoacyl-tRNA + H2O = an N-acyl-L-amino acid + a tRNA + H(+)</text>
        <dbReference type="Rhea" id="RHEA:54448"/>
        <dbReference type="Rhea" id="RHEA-COMP:10123"/>
        <dbReference type="Rhea" id="RHEA-COMP:13883"/>
        <dbReference type="ChEBI" id="CHEBI:15377"/>
        <dbReference type="ChEBI" id="CHEBI:15378"/>
        <dbReference type="ChEBI" id="CHEBI:59874"/>
        <dbReference type="ChEBI" id="CHEBI:78442"/>
        <dbReference type="ChEBI" id="CHEBI:138191"/>
        <dbReference type="EC" id="3.1.1.29"/>
    </reaction>
</comment>
<comment type="subunit">
    <text evidence="1">Monomer.</text>
</comment>
<comment type="subcellular location">
    <subcellularLocation>
        <location evidence="1">Cytoplasm</location>
    </subcellularLocation>
</comment>
<comment type="similarity">
    <text evidence="1">Belongs to the PTH family.</text>
</comment>
<keyword id="KW-0963">Cytoplasm</keyword>
<keyword id="KW-0378">Hydrolase</keyword>
<keyword id="KW-0694">RNA-binding</keyword>
<keyword id="KW-0820">tRNA-binding</keyword>
<sequence length="250" mass="27568">MLLIAGLGNPGPQYAHNRHNIGFMAADEIFRRHRFSNWQKKFQAEIADGVIDGEKVLLVKPQTFMNLSGQSIGEAMRFYKMTPADLVVIYDELDLVPGKLRIKTGGGSGGHNGIKSIDAHMQSFPGGQNYRRMRLGIGHPGAKELVHNYVLGDFAKADNEWLDTLMGAVADNVAMLARREDNSFMNRIALAMGDGNQRPGGVKTDPAQLEKAPPKAQSHIRQARQNQKKPNIPESGPMAEMLKKLLGKKD</sequence>
<gene>
    <name evidence="1" type="primary">pth</name>
    <name type="ordered locus">BruAb1_1525</name>
</gene>
<feature type="chain" id="PRO_0000187704" description="Peptidyl-tRNA hydrolase">
    <location>
        <begin position="1"/>
        <end position="250"/>
    </location>
</feature>
<feature type="region of interest" description="Disordered" evidence="2">
    <location>
        <begin position="192"/>
        <end position="250"/>
    </location>
</feature>
<feature type="compositionally biased region" description="Polar residues" evidence="2">
    <location>
        <begin position="219"/>
        <end position="229"/>
    </location>
</feature>
<feature type="compositionally biased region" description="Basic and acidic residues" evidence="2">
    <location>
        <begin position="241"/>
        <end position="250"/>
    </location>
</feature>
<feature type="active site" description="Proton acceptor" evidence="1">
    <location>
        <position position="19"/>
    </location>
</feature>
<feature type="binding site" evidence="1">
    <location>
        <position position="14"/>
    </location>
    <ligand>
        <name>tRNA</name>
        <dbReference type="ChEBI" id="CHEBI:17843"/>
    </ligand>
</feature>
<feature type="binding site" evidence="1">
    <location>
        <position position="64"/>
    </location>
    <ligand>
        <name>tRNA</name>
        <dbReference type="ChEBI" id="CHEBI:17843"/>
    </ligand>
</feature>
<feature type="binding site" evidence="1">
    <location>
        <position position="66"/>
    </location>
    <ligand>
        <name>tRNA</name>
        <dbReference type="ChEBI" id="CHEBI:17843"/>
    </ligand>
</feature>
<feature type="binding site" evidence="1">
    <location>
        <position position="112"/>
    </location>
    <ligand>
        <name>tRNA</name>
        <dbReference type="ChEBI" id="CHEBI:17843"/>
    </ligand>
</feature>
<feature type="site" description="Discriminates between blocked and unblocked aminoacyl-tRNA" evidence="1">
    <location>
        <position position="9"/>
    </location>
</feature>
<feature type="site" description="Stabilizes the basic form of H active site to accept a proton" evidence="1">
    <location>
        <position position="91"/>
    </location>
</feature>
<proteinExistence type="inferred from homology"/>